<reference key="1">
    <citation type="submission" date="2008-06" db="EMBL/GenBank/DDBJ databases">
        <title>Complete sequence of Pelodictyon phaeoclathratiforme BU-1.</title>
        <authorList>
            <consortium name="US DOE Joint Genome Institute"/>
            <person name="Lucas S."/>
            <person name="Copeland A."/>
            <person name="Lapidus A."/>
            <person name="Glavina del Rio T."/>
            <person name="Dalin E."/>
            <person name="Tice H."/>
            <person name="Bruce D."/>
            <person name="Goodwin L."/>
            <person name="Pitluck S."/>
            <person name="Schmutz J."/>
            <person name="Larimer F."/>
            <person name="Land M."/>
            <person name="Hauser L."/>
            <person name="Kyrpides N."/>
            <person name="Mikhailova N."/>
            <person name="Liu Z."/>
            <person name="Li T."/>
            <person name="Zhao F."/>
            <person name="Overmann J."/>
            <person name="Bryant D.A."/>
            <person name="Richardson P."/>
        </authorList>
    </citation>
    <scope>NUCLEOTIDE SEQUENCE [LARGE SCALE GENOMIC DNA]</scope>
    <source>
        <strain>DSM 5477 / BU-1</strain>
    </source>
</reference>
<sequence>MLDINTIRQHPEEIISMLHNRQLASEEPKIEQLLNLDRERKGLVQRSDDLKALRNKVSKEIAEIKKSGIGSSGELILQMKSVSEEIAGMDTSLGHLEEEIETILLGLPNKLHPSVPVGRSADDNQIFKEPISFPYHLDFPLKNHLELGKSLRILDFERGAKVCGAGFPVYIGKGARLERALINFMLDCHTERHGYTEVFPPFFVNQESLRGTGQWPKFADQVYHMEEDDLYAIPTAEVPITNLHRGEMLDTKTLPISYAAYSACFRREAGSYGKDTRGFLRVHQFNKVEMVKFTRPEESYEALETIRENAEAILTALKIPYRVLLLCSGDISANATKCYDIEVWSPAEQKYLEASSCSNFEDYQARRANIRFKSESNAKPEFVHTLNGSGLATSRLMVSLLEHYQTAEGSIMVPEVLRHYTRFDEITQAAE</sequence>
<proteinExistence type="inferred from homology"/>
<keyword id="KW-0030">Aminoacyl-tRNA synthetase</keyword>
<keyword id="KW-0067">ATP-binding</keyword>
<keyword id="KW-0963">Cytoplasm</keyword>
<keyword id="KW-0436">Ligase</keyword>
<keyword id="KW-0547">Nucleotide-binding</keyword>
<keyword id="KW-0648">Protein biosynthesis</keyword>
<keyword id="KW-1185">Reference proteome</keyword>
<accession>B4SF71</accession>
<organism>
    <name type="scientific">Pelodictyon phaeoclathratiforme (strain DSM 5477 / BU-1)</name>
    <dbReference type="NCBI Taxonomy" id="324925"/>
    <lineage>
        <taxon>Bacteria</taxon>
        <taxon>Pseudomonadati</taxon>
        <taxon>Chlorobiota</taxon>
        <taxon>Chlorobiia</taxon>
        <taxon>Chlorobiales</taxon>
        <taxon>Chlorobiaceae</taxon>
        <taxon>Chlorobium/Pelodictyon group</taxon>
        <taxon>Pelodictyon</taxon>
    </lineage>
</organism>
<protein>
    <recommendedName>
        <fullName evidence="1">Serine--tRNA ligase</fullName>
        <ecNumber evidence="1">6.1.1.11</ecNumber>
    </recommendedName>
    <alternativeName>
        <fullName evidence="1">Seryl-tRNA synthetase</fullName>
        <shortName evidence="1">SerRS</shortName>
    </alternativeName>
    <alternativeName>
        <fullName evidence="1">Seryl-tRNA(Ser/Sec) synthetase</fullName>
    </alternativeName>
</protein>
<name>SYS_PELPB</name>
<feature type="chain" id="PRO_1000098105" description="Serine--tRNA ligase">
    <location>
        <begin position="1"/>
        <end position="431"/>
    </location>
</feature>
<feature type="binding site" evidence="1">
    <location>
        <begin position="235"/>
        <end position="237"/>
    </location>
    <ligand>
        <name>L-serine</name>
        <dbReference type="ChEBI" id="CHEBI:33384"/>
    </ligand>
</feature>
<feature type="binding site" evidence="1">
    <location>
        <begin position="266"/>
        <end position="268"/>
    </location>
    <ligand>
        <name>ATP</name>
        <dbReference type="ChEBI" id="CHEBI:30616"/>
    </ligand>
</feature>
<feature type="binding site" evidence="1">
    <location>
        <position position="282"/>
    </location>
    <ligand>
        <name>ATP</name>
        <dbReference type="ChEBI" id="CHEBI:30616"/>
    </ligand>
</feature>
<feature type="binding site" evidence="1">
    <location>
        <position position="289"/>
    </location>
    <ligand>
        <name>L-serine</name>
        <dbReference type="ChEBI" id="CHEBI:33384"/>
    </ligand>
</feature>
<feature type="binding site" evidence="1">
    <location>
        <begin position="353"/>
        <end position="356"/>
    </location>
    <ligand>
        <name>ATP</name>
        <dbReference type="ChEBI" id="CHEBI:30616"/>
    </ligand>
</feature>
<feature type="binding site" evidence="1">
    <location>
        <position position="389"/>
    </location>
    <ligand>
        <name>L-serine</name>
        <dbReference type="ChEBI" id="CHEBI:33384"/>
    </ligand>
</feature>
<evidence type="ECO:0000255" key="1">
    <source>
        <dbReference type="HAMAP-Rule" id="MF_00176"/>
    </source>
</evidence>
<gene>
    <name evidence="1" type="primary">serS</name>
    <name type="ordered locus">Ppha_0931</name>
</gene>
<comment type="function">
    <text evidence="1">Catalyzes the attachment of serine to tRNA(Ser). Is also able to aminoacylate tRNA(Sec) with serine, to form the misacylated tRNA L-seryl-tRNA(Sec), which will be further converted into selenocysteinyl-tRNA(Sec).</text>
</comment>
<comment type="catalytic activity">
    <reaction evidence="1">
        <text>tRNA(Ser) + L-serine + ATP = L-seryl-tRNA(Ser) + AMP + diphosphate + H(+)</text>
        <dbReference type="Rhea" id="RHEA:12292"/>
        <dbReference type="Rhea" id="RHEA-COMP:9669"/>
        <dbReference type="Rhea" id="RHEA-COMP:9703"/>
        <dbReference type="ChEBI" id="CHEBI:15378"/>
        <dbReference type="ChEBI" id="CHEBI:30616"/>
        <dbReference type="ChEBI" id="CHEBI:33019"/>
        <dbReference type="ChEBI" id="CHEBI:33384"/>
        <dbReference type="ChEBI" id="CHEBI:78442"/>
        <dbReference type="ChEBI" id="CHEBI:78533"/>
        <dbReference type="ChEBI" id="CHEBI:456215"/>
        <dbReference type="EC" id="6.1.1.11"/>
    </reaction>
</comment>
<comment type="catalytic activity">
    <reaction evidence="1">
        <text>tRNA(Sec) + L-serine + ATP = L-seryl-tRNA(Sec) + AMP + diphosphate + H(+)</text>
        <dbReference type="Rhea" id="RHEA:42580"/>
        <dbReference type="Rhea" id="RHEA-COMP:9742"/>
        <dbReference type="Rhea" id="RHEA-COMP:10128"/>
        <dbReference type="ChEBI" id="CHEBI:15378"/>
        <dbReference type="ChEBI" id="CHEBI:30616"/>
        <dbReference type="ChEBI" id="CHEBI:33019"/>
        <dbReference type="ChEBI" id="CHEBI:33384"/>
        <dbReference type="ChEBI" id="CHEBI:78442"/>
        <dbReference type="ChEBI" id="CHEBI:78533"/>
        <dbReference type="ChEBI" id="CHEBI:456215"/>
        <dbReference type="EC" id="6.1.1.11"/>
    </reaction>
</comment>
<comment type="pathway">
    <text evidence="1">Aminoacyl-tRNA biosynthesis; selenocysteinyl-tRNA(Sec) biosynthesis; L-seryl-tRNA(Sec) from L-serine and tRNA(Sec): step 1/1.</text>
</comment>
<comment type="subunit">
    <text evidence="1">Homodimer. The tRNA molecule binds across the dimer.</text>
</comment>
<comment type="subcellular location">
    <subcellularLocation>
        <location evidence="1">Cytoplasm</location>
    </subcellularLocation>
</comment>
<comment type="domain">
    <text evidence="1">Consists of two distinct domains, a catalytic core and a N-terminal extension that is involved in tRNA binding.</text>
</comment>
<comment type="similarity">
    <text evidence="1">Belongs to the class-II aminoacyl-tRNA synthetase family. Type-1 seryl-tRNA synthetase subfamily.</text>
</comment>
<dbReference type="EC" id="6.1.1.11" evidence="1"/>
<dbReference type="EMBL" id="CP001110">
    <property type="protein sequence ID" value="ACF43218.1"/>
    <property type="molecule type" value="Genomic_DNA"/>
</dbReference>
<dbReference type="RefSeq" id="WP_012507713.1">
    <property type="nucleotide sequence ID" value="NC_011060.1"/>
</dbReference>
<dbReference type="SMR" id="B4SF71"/>
<dbReference type="STRING" id="324925.Ppha_0931"/>
<dbReference type="KEGG" id="pph:Ppha_0931"/>
<dbReference type="eggNOG" id="COG0172">
    <property type="taxonomic scope" value="Bacteria"/>
</dbReference>
<dbReference type="HOGENOM" id="CLU_023797_0_1_10"/>
<dbReference type="OrthoDB" id="9804647at2"/>
<dbReference type="UniPathway" id="UPA00906">
    <property type="reaction ID" value="UER00895"/>
</dbReference>
<dbReference type="Proteomes" id="UP000002724">
    <property type="component" value="Chromosome"/>
</dbReference>
<dbReference type="GO" id="GO:0005737">
    <property type="term" value="C:cytoplasm"/>
    <property type="evidence" value="ECO:0007669"/>
    <property type="project" value="UniProtKB-SubCell"/>
</dbReference>
<dbReference type="GO" id="GO:0005524">
    <property type="term" value="F:ATP binding"/>
    <property type="evidence" value="ECO:0007669"/>
    <property type="project" value="UniProtKB-UniRule"/>
</dbReference>
<dbReference type="GO" id="GO:0004828">
    <property type="term" value="F:serine-tRNA ligase activity"/>
    <property type="evidence" value="ECO:0007669"/>
    <property type="project" value="UniProtKB-UniRule"/>
</dbReference>
<dbReference type="GO" id="GO:0016260">
    <property type="term" value="P:selenocysteine biosynthetic process"/>
    <property type="evidence" value="ECO:0007669"/>
    <property type="project" value="UniProtKB-UniRule"/>
</dbReference>
<dbReference type="GO" id="GO:0006434">
    <property type="term" value="P:seryl-tRNA aminoacylation"/>
    <property type="evidence" value="ECO:0007669"/>
    <property type="project" value="UniProtKB-UniRule"/>
</dbReference>
<dbReference type="CDD" id="cd00770">
    <property type="entry name" value="SerRS_core"/>
    <property type="match status" value="1"/>
</dbReference>
<dbReference type="Gene3D" id="3.30.930.10">
    <property type="entry name" value="Bira Bifunctional Protein, Domain 2"/>
    <property type="match status" value="1"/>
</dbReference>
<dbReference type="Gene3D" id="1.10.287.40">
    <property type="entry name" value="Serine-tRNA synthetase, tRNA binding domain"/>
    <property type="match status" value="1"/>
</dbReference>
<dbReference type="HAMAP" id="MF_00176">
    <property type="entry name" value="Ser_tRNA_synth_type1"/>
    <property type="match status" value="1"/>
</dbReference>
<dbReference type="InterPro" id="IPR002314">
    <property type="entry name" value="aa-tRNA-synt_IIb"/>
</dbReference>
<dbReference type="InterPro" id="IPR006195">
    <property type="entry name" value="aa-tRNA-synth_II"/>
</dbReference>
<dbReference type="InterPro" id="IPR045864">
    <property type="entry name" value="aa-tRNA-synth_II/BPL/LPL"/>
</dbReference>
<dbReference type="InterPro" id="IPR002317">
    <property type="entry name" value="Ser-tRNA-ligase_type_1"/>
</dbReference>
<dbReference type="InterPro" id="IPR015866">
    <property type="entry name" value="Ser-tRNA-synth_1_N"/>
</dbReference>
<dbReference type="InterPro" id="IPR042103">
    <property type="entry name" value="SerRS_1_N_sf"/>
</dbReference>
<dbReference type="InterPro" id="IPR033729">
    <property type="entry name" value="SerRS_core"/>
</dbReference>
<dbReference type="InterPro" id="IPR010978">
    <property type="entry name" value="tRNA-bd_arm"/>
</dbReference>
<dbReference type="NCBIfam" id="TIGR00414">
    <property type="entry name" value="serS"/>
    <property type="match status" value="1"/>
</dbReference>
<dbReference type="PANTHER" id="PTHR43697:SF1">
    <property type="entry name" value="SERINE--TRNA LIGASE"/>
    <property type="match status" value="1"/>
</dbReference>
<dbReference type="PANTHER" id="PTHR43697">
    <property type="entry name" value="SERYL-TRNA SYNTHETASE"/>
    <property type="match status" value="1"/>
</dbReference>
<dbReference type="Pfam" id="PF02403">
    <property type="entry name" value="Seryl_tRNA_N"/>
    <property type="match status" value="1"/>
</dbReference>
<dbReference type="Pfam" id="PF00587">
    <property type="entry name" value="tRNA-synt_2b"/>
    <property type="match status" value="1"/>
</dbReference>
<dbReference type="PIRSF" id="PIRSF001529">
    <property type="entry name" value="Ser-tRNA-synth_IIa"/>
    <property type="match status" value="1"/>
</dbReference>
<dbReference type="PRINTS" id="PR00981">
    <property type="entry name" value="TRNASYNTHSER"/>
</dbReference>
<dbReference type="SUPFAM" id="SSF55681">
    <property type="entry name" value="Class II aaRS and biotin synthetases"/>
    <property type="match status" value="1"/>
</dbReference>
<dbReference type="SUPFAM" id="SSF46589">
    <property type="entry name" value="tRNA-binding arm"/>
    <property type="match status" value="1"/>
</dbReference>
<dbReference type="PROSITE" id="PS50862">
    <property type="entry name" value="AA_TRNA_LIGASE_II"/>
    <property type="match status" value="1"/>
</dbReference>